<gene>
    <name evidence="1" type="primary">rps27ae</name>
    <name type="ordered locus">Igni_0270</name>
</gene>
<proteinExistence type="inferred from homology"/>
<feature type="chain" id="PRO_1000212918" description="Small ribosomal subunit protein eS31">
    <location>
        <begin position="1"/>
        <end position="58"/>
    </location>
</feature>
<feature type="zinc finger region" description="C4-type" evidence="1">
    <location>
        <begin position="29"/>
        <end position="51"/>
    </location>
</feature>
<feature type="binding site" evidence="1">
    <location>
        <position position="29"/>
    </location>
    <ligand>
        <name>Zn(2+)</name>
        <dbReference type="ChEBI" id="CHEBI:29105"/>
    </ligand>
</feature>
<feature type="binding site" evidence="1">
    <location>
        <position position="32"/>
    </location>
    <ligand>
        <name>Zn(2+)</name>
        <dbReference type="ChEBI" id="CHEBI:29105"/>
    </ligand>
</feature>
<feature type="binding site" evidence="1">
    <location>
        <position position="48"/>
    </location>
    <ligand>
        <name>Zn(2+)</name>
        <dbReference type="ChEBI" id="CHEBI:29105"/>
    </ligand>
</feature>
<feature type="binding site" evidence="1">
    <location>
        <position position="51"/>
    </location>
    <ligand>
        <name>Zn(2+)</name>
        <dbReference type="ChEBI" id="CHEBI:29105"/>
    </ligand>
</feature>
<sequence length="58" mass="6920">MPKHAQVKPHLLYEWDYEKGIIKPKNKRCPRCGSFMAHHLKPVPRWHCGKCGYTIFEK</sequence>
<reference key="1">
    <citation type="journal article" date="2008" name="Genome Biol.">
        <title>A genomic analysis of the archaeal system Ignicoccus hospitalis-Nanoarchaeum equitans.</title>
        <authorList>
            <person name="Podar M."/>
            <person name="Anderson I."/>
            <person name="Makarova K.S."/>
            <person name="Elkins J.G."/>
            <person name="Ivanova N."/>
            <person name="Wall M.A."/>
            <person name="Lykidis A."/>
            <person name="Mavromatis K."/>
            <person name="Sun H."/>
            <person name="Hudson M.E."/>
            <person name="Chen W."/>
            <person name="Deciu C."/>
            <person name="Hutchison D."/>
            <person name="Eads J.R."/>
            <person name="Anderson A."/>
            <person name="Fernandes F."/>
            <person name="Szeto E."/>
            <person name="Lapidus A."/>
            <person name="Kyrpides N.C."/>
            <person name="Saier M.H. Jr."/>
            <person name="Richardson P.M."/>
            <person name="Rachel R."/>
            <person name="Huber H."/>
            <person name="Eisen J.A."/>
            <person name="Koonin E.V."/>
            <person name="Keller M."/>
            <person name="Stetter K.O."/>
        </authorList>
    </citation>
    <scope>NUCLEOTIDE SEQUENCE [LARGE SCALE GENOMIC DNA]</scope>
    <source>
        <strain>KIN4/I / DSM 18386 / JCM 14125</strain>
    </source>
</reference>
<dbReference type="EMBL" id="CP000816">
    <property type="protein sequence ID" value="ABU81454.1"/>
    <property type="molecule type" value="Genomic_DNA"/>
</dbReference>
<dbReference type="RefSeq" id="WP_011998306.1">
    <property type="nucleotide sequence ID" value="NC_009776.1"/>
</dbReference>
<dbReference type="SMR" id="A8A952"/>
<dbReference type="STRING" id="453591.Igni_0270"/>
<dbReference type="GeneID" id="5562796"/>
<dbReference type="KEGG" id="iho:Igni_0270"/>
<dbReference type="eggNOG" id="arCOG04183">
    <property type="taxonomic scope" value="Archaea"/>
</dbReference>
<dbReference type="HOGENOM" id="CLU_179743_1_0_2"/>
<dbReference type="OrthoDB" id="25142at2157"/>
<dbReference type="PhylomeDB" id="A8A952"/>
<dbReference type="Proteomes" id="UP000000262">
    <property type="component" value="Chromosome"/>
</dbReference>
<dbReference type="GO" id="GO:1990904">
    <property type="term" value="C:ribonucleoprotein complex"/>
    <property type="evidence" value="ECO:0007669"/>
    <property type="project" value="UniProtKB-KW"/>
</dbReference>
<dbReference type="GO" id="GO:0005840">
    <property type="term" value="C:ribosome"/>
    <property type="evidence" value="ECO:0007669"/>
    <property type="project" value="UniProtKB-KW"/>
</dbReference>
<dbReference type="GO" id="GO:0003735">
    <property type="term" value="F:structural constituent of ribosome"/>
    <property type="evidence" value="ECO:0007669"/>
    <property type="project" value="InterPro"/>
</dbReference>
<dbReference type="GO" id="GO:0008270">
    <property type="term" value="F:zinc ion binding"/>
    <property type="evidence" value="ECO:0007669"/>
    <property type="project" value="UniProtKB-UniRule"/>
</dbReference>
<dbReference type="GO" id="GO:0006412">
    <property type="term" value="P:translation"/>
    <property type="evidence" value="ECO:0007669"/>
    <property type="project" value="UniProtKB-UniRule"/>
</dbReference>
<dbReference type="Gene3D" id="6.20.50.180">
    <property type="match status" value="1"/>
</dbReference>
<dbReference type="HAMAP" id="MF_00777">
    <property type="entry name" value="Ribosomal_eS31"/>
    <property type="match status" value="1"/>
</dbReference>
<dbReference type="InterPro" id="IPR002906">
    <property type="entry name" value="Ribosomal_eS31"/>
</dbReference>
<dbReference type="InterPro" id="IPR022845">
    <property type="entry name" value="Ribosomal_eS31_arc"/>
</dbReference>
<dbReference type="InterPro" id="IPR011332">
    <property type="entry name" value="Ribosomal_zn-bd"/>
</dbReference>
<dbReference type="NCBIfam" id="NF001669">
    <property type="entry name" value="PRK00432.1"/>
    <property type="match status" value="1"/>
</dbReference>
<dbReference type="Pfam" id="PF01599">
    <property type="entry name" value="Ribosomal_S27"/>
    <property type="match status" value="1"/>
</dbReference>
<dbReference type="SMART" id="SM01402">
    <property type="entry name" value="Ribosomal_S27"/>
    <property type="match status" value="1"/>
</dbReference>
<dbReference type="SUPFAM" id="SSF57829">
    <property type="entry name" value="Zn-binding ribosomal proteins"/>
    <property type="match status" value="1"/>
</dbReference>
<keyword id="KW-0479">Metal-binding</keyword>
<keyword id="KW-1185">Reference proteome</keyword>
<keyword id="KW-0687">Ribonucleoprotein</keyword>
<keyword id="KW-0689">Ribosomal protein</keyword>
<keyword id="KW-0862">Zinc</keyword>
<keyword id="KW-0863">Zinc-finger</keyword>
<evidence type="ECO:0000255" key="1">
    <source>
        <dbReference type="HAMAP-Rule" id="MF_00777"/>
    </source>
</evidence>
<evidence type="ECO:0000305" key="2"/>
<name>RS27A_IGNH4</name>
<accession>A8A952</accession>
<organism>
    <name type="scientific">Ignicoccus hospitalis (strain KIN4/I / DSM 18386 / JCM 14125)</name>
    <dbReference type="NCBI Taxonomy" id="453591"/>
    <lineage>
        <taxon>Archaea</taxon>
        <taxon>Thermoproteota</taxon>
        <taxon>Thermoprotei</taxon>
        <taxon>Desulfurococcales</taxon>
        <taxon>Desulfurococcaceae</taxon>
        <taxon>Ignicoccus</taxon>
    </lineage>
</organism>
<comment type="cofactor">
    <cofactor evidence="1">
        <name>Zn(2+)</name>
        <dbReference type="ChEBI" id="CHEBI:29105"/>
    </cofactor>
    <text evidence="1">Binds 1 zinc ion per subunit.</text>
</comment>
<comment type="subunit">
    <text evidence="1">Part of the 30S ribosomal subunit.</text>
</comment>
<comment type="similarity">
    <text evidence="1">Belongs to the eukaryotic ribosomal protein eS31 family.</text>
</comment>
<protein>
    <recommendedName>
        <fullName evidence="1">Small ribosomal subunit protein eS31</fullName>
    </recommendedName>
    <alternativeName>
        <fullName evidence="2">30S ribosomal protein S27ae</fullName>
    </alternativeName>
</protein>